<feature type="chain" id="PRO_1000018744" description="Phosphoribosylaminoimidazole-succinocarboxamide synthase">
    <location>
        <begin position="1"/>
        <end position="261"/>
    </location>
</feature>
<evidence type="ECO:0000255" key="1">
    <source>
        <dbReference type="HAMAP-Rule" id="MF_00137"/>
    </source>
</evidence>
<sequence>MSRRRQIYEGKAKILYEGPEPGTLIQYFKDDATAFNAQKRGTINGKGVINNRISEYVFTRLAHIGIPTHFIRRLNMREQLVRQAEIIPIEVVVRNIAAGSISKRLGIEEGEPLPHTLIEYYYKDDALGDPMIAEEHIACFGWASNEEMQDISSMAIRVNDFLCGMFAAINISLVDFKLEFGRIWDGDYSRVILADEISPDGCRLWDMTTGEKLDKDRFRRDLGGEEEAYQEVARRLGLLENDGGPSEVFDLGAHRKLRGKK</sequence>
<comment type="catalytic activity">
    <reaction evidence="1">
        <text>5-amino-1-(5-phospho-D-ribosyl)imidazole-4-carboxylate + L-aspartate + ATP = (2S)-2-[5-amino-1-(5-phospho-beta-D-ribosyl)imidazole-4-carboxamido]succinate + ADP + phosphate + 2 H(+)</text>
        <dbReference type="Rhea" id="RHEA:22628"/>
        <dbReference type="ChEBI" id="CHEBI:15378"/>
        <dbReference type="ChEBI" id="CHEBI:29991"/>
        <dbReference type="ChEBI" id="CHEBI:30616"/>
        <dbReference type="ChEBI" id="CHEBI:43474"/>
        <dbReference type="ChEBI" id="CHEBI:58443"/>
        <dbReference type="ChEBI" id="CHEBI:77657"/>
        <dbReference type="ChEBI" id="CHEBI:456216"/>
        <dbReference type="EC" id="6.3.2.6"/>
    </reaction>
</comment>
<comment type="pathway">
    <text evidence="1">Purine metabolism; IMP biosynthesis via de novo pathway; 5-amino-1-(5-phospho-D-ribosyl)imidazole-4-carboxamide from 5-amino-1-(5-phospho-D-ribosyl)imidazole-4-carboxylate: step 1/2.</text>
</comment>
<comment type="similarity">
    <text evidence="1">Belongs to the SAICAR synthetase family.</text>
</comment>
<keyword id="KW-0067">ATP-binding</keyword>
<keyword id="KW-0436">Ligase</keyword>
<keyword id="KW-0547">Nucleotide-binding</keyword>
<keyword id="KW-0658">Purine biosynthesis</keyword>
<keyword id="KW-1185">Reference proteome</keyword>
<reference key="1">
    <citation type="submission" date="2006-01" db="EMBL/GenBank/DDBJ databases">
        <title>Complete sequence of Novosphingobium aromaticivorans DSM 12444.</title>
        <authorList>
            <consortium name="US DOE Joint Genome Institute"/>
            <person name="Copeland A."/>
            <person name="Lucas S."/>
            <person name="Lapidus A."/>
            <person name="Barry K."/>
            <person name="Detter J.C."/>
            <person name="Glavina T."/>
            <person name="Hammon N."/>
            <person name="Israni S."/>
            <person name="Pitluck S."/>
            <person name="Chain P."/>
            <person name="Malfatti S."/>
            <person name="Shin M."/>
            <person name="Vergez L."/>
            <person name="Schmutz J."/>
            <person name="Larimer F."/>
            <person name="Land M."/>
            <person name="Kyrpides N."/>
            <person name="Ivanova N."/>
            <person name="Fredrickson J."/>
            <person name="Balkwill D."/>
            <person name="Romine M.F."/>
            <person name="Richardson P."/>
        </authorList>
    </citation>
    <scope>NUCLEOTIDE SEQUENCE [LARGE SCALE GENOMIC DNA]</scope>
    <source>
        <strain>ATCC 700278 / DSM 12444 / CCUG 56034 / CIP 105152 / NBRC 16084 / F199</strain>
    </source>
</reference>
<organism>
    <name type="scientific">Novosphingobium aromaticivorans (strain ATCC 700278 / DSM 12444 / CCUG 56034 / CIP 105152 / NBRC 16084 / F199)</name>
    <dbReference type="NCBI Taxonomy" id="279238"/>
    <lineage>
        <taxon>Bacteria</taxon>
        <taxon>Pseudomonadati</taxon>
        <taxon>Pseudomonadota</taxon>
        <taxon>Alphaproteobacteria</taxon>
        <taxon>Sphingomonadales</taxon>
        <taxon>Sphingomonadaceae</taxon>
        <taxon>Novosphingobium</taxon>
    </lineage>
</organism>
<gene>
    <name evidence="1" type="primary">purC</name>
    <name type="ordered locus">Saro_1041</name>
</gene>
<dbReference type="EC" id="6.3.2.6" evidence="1"/>
<dbReference type="EMBL" id="CP000248">
    <property type="protein sequence ID" value="ABD25486.1"/>
    <property type="molecule type" value="Genomic_DNA"/>
</dbReference>
<dbReference type="RefSeq" id="WP_011444700.1">
    <property type="nucleotide sequence ID" value="NC_007794.1"/>
</dbReference>
<dbReference type="SMR" id="Q2G9I7"/>
<dbReference type="STRING" id="279238.Saro_1041"/>
<dbReference type="KEGG" id="nar:Saro_1041"/>
<dbReference type="eggNOG" id="COG0152">
    <property type="taxonomic scope" value="Bacteria"/>
</dbReference>
<dbReference type="HOGENOM" id="CLU_061495_2_0_5"/>
<dbReference type="UniPathway" id="UPA00074">
    <property type="reaction ID" value="UER00131"/>
</dbReference>
<dbReference type="Proteomes" id="UP000009134">
    <property type="component" value="Chromosome"/>
</dbReference>
<dbReference type="GO" id="GO:0005829">
    <property type="term" value="C:cytosol"/>
    <property type="evidence" value="ECO:0007669"/>
    <property type="project" value="TreeGrafter"/>
</dbReference>
<dbReference type="GO" id="GO:0005524">
    <property type="term" value="F:ATP binding"/>
    <property type="evidence" value="ECO:0007669"/>
    <property type="project" value="UniProtKB-KW"/>
</dbReference>
<dbReference type="GO" id="GO:0004639">
    <property type="term" value="F:phosphoribosylaminoimidazolesuccinocarboxamide synthase activity"/>
    <property type="evidence" value="ECO:0007669"/>
    <property type="project" value="UniProtKB-UniRule"/>
</dbReference>
<dbReference type="GO" id="GO:0006189">
    <property type="term" value="P:'de novo' IMP biosynthetic process"/>
    <property type="evidence" value="ECO:0007669"/>
    <property type="project" value="UniProtKB-UniRule"/>
</dbReference>
<dbReference type="GO" id="GO:0009236">
    <property type="term" value="P:cobalamin biosynthetic process"/>
    <property type="evidence" value="ECO:0007669"/>
    <property type="project" value="InterPro"/>
</dbReference>
<dbReference type="CDD" id="cd01415">
    <property type="entry name" value="SAICAR_synt_PurC"/>
    <property type="match status" value="1"/>
</dbReference>
<dbReference type="FunFam" id="3.30.470.20:FF:000006">
    <property type="entry name" value="Phosphoribosylaminoimidazole-succinocarboxamide synthase"/>
    <property type="match status" value="1"/>
</dbReference>
<dbReference type="Gene3D" id="3.30.470.20">
    <property type="entry name" value="ATP-grasp fold, B domain"/>
    <property type="match status" value="1"/>
</dbReference>
<dbReference type="Gene3D" id="3.30.200.20">
    <property type="entry name" value="Phosphorylase Kinase, domain 1"/>
    <property type="match status" value="1"/>
</dbReference>
<dbReference type="HAMAP" id="MF_00137">
    <property type="entry name" value="SAICAR_synth"/>
    <property type="match status" value="1"/>
</dbReference>
<dbReference type="InterPro" id="IPR028923">
    <property type="entry name" value="SAICAR_synt/ADE2_N"/>
</dbReference>
<dbReference type="InterPro" id="IPR033934">
    <property type="entry name" value="SAICAR_synt_PurC"/>
</dbReference>
<dbReference type="InterPro" id="IPR001636">
    <property type="entry name" value="SAICAR_synth"/>
</dbReference>
<dbReference type="InterPro" id="IPR050089">
    <property type="entry name" value="SAICAR_synthetase"/>
</dbReference>
<dbReference type="InterPro" id="IPR018236">
    <property type="entry name" value="SAICAR_synthetase_CS"/>
</dbReference>
<dbReference type="NCBIfam" id="TIGR00081">
    <property type="entry name" value="purC"/>
    <property type="match status" value="1"/>
</dbReference>
<dbReference type="PANTHER" id="PTHR43599">
    <property type="entry name" value="MULTIFUNCTIONAL PROTEIN ADE2"/>
    <property type="match status" value="1"/>
</dbReference>
<dbReference type="PANTHER" id="PTHR43599:SF3">
    <property type="entry name" value="SI:DKEY-6E2.2"/>
    <property type="match status" value="1"/>
</dbReference>
<dbReference type="Pfam" id="PF01259">
    <property type="entry name" value="SAICAR_synt"/>
    <property type="match status" value="1"/>
</dbReference>
<dbReference type="SUPFAM" id="SSF56104">
    <property type="entry name" value="SAICAR synthase-like"/>
    <property type="match status" value="1"/>
</dbReference>
<dbReference type="PROSITE" id="PS01057">
    <property type="entry name" value="SAICAR_SYNTHETASE_1"/>
    <property type="match status" value="1"/>
</dbReference>
<dbReference type="PROSITE" id="PS01058">
    <property type="entry name" value="SAICAR_SYNTHETASE_2"/>
    <property type="match status" value="1"/>
</dbReference>
<protein>
    <recommendedName>
        <fullName evidence="1">Phosphoribosylaminoimidazole-succinocarboxamide synthase</fullName>
        <ecNumber evidence="1">6.3.2.6</ecNumber>
    </recommendedName>
    <alternativeName>
        <fullName evidence="1">SAICAR synthetase</fullName>
    </alternativeName>
</protein>
<name>PUR7_NOVAD</name>
<accession>Q2G9I7</accession>
<proteinExistence type="inferred from homology"/>